<reference key="1">
    <citation type="journal article" date="2016" name="Sci. Rep.">
        <title>Exactin: a specific inhibitor of Factor X activation by extrinsic tenase complex from the venom of Hemachatus haemachatus.</title>
        <authorList>
            <person name="Girish V.M."/>
            <person name="Kini R.M."/>
        </authorList>
    </citation>
    <scope>PROTEIN SEQUENCE</scope>
    <scope>SUBCELLULAR LOCATION</scope>
</reference>
<proteinExistence type="evidence at protein level"/>
<sequence>LKCNRLIPPFWKTCPEGKNLCYKMTMRLAPKVPVKRGCIDVCPKSSLLIKYMCCTNDKCN</sequence>
<protein>
    <recommendedName>
        <fullName evidence="5">Naniproin</fullName>
    </recommendedName>
</protein>
<evidence type="ECO:0000250" key="1">
    <source>
        <dbReference type="UniProtKB" id="P01443"/>
    </source>
</evidence>
<evidence type="ECO:0000250" key="2">
    <source>
        <dbReference type="UniProtKB" id="P01468"/>
    </source>
</evidence>
<evidence type="ECO:0000250" key="3">
    <source>
        <dbReference type="UniProtKB" id="P60301"/>
    </source>
</evidence>
<evidence type="ECO:0000269" key="4">
    <source>
    </source>
</evidence>
<evidence type="ECO:0000303" key="5">
    <source>
    </source>
</evidence>
<evidence type="ECO:0000305" key="6"/>
<evidence type="ECO:0000305" key="7">
    <source>
    </source>
</evidence>
<feature type="chain" id="PRO_0000447300" description="Naniproin" evidence="7">
    <location>
        <begin position="1"/>
        <end position="60"/>
    </location>
</feature>
<feature type="disulfide bond" evidence="2">
    <location>
        <begin position="3"/>
        <end position="21"/>
    </location>
</feature>
<feature type="disulfide bond" evidence="2">
    <location>
        <begin position="14"/>
        <end position="38"/>
    </location>
</feature>
<feature type="disulfide bond" evidence="2">
    <location>
        <begin position="42"/>
        <end position="53"/>
    </location>
</feature>
<feature type="disulfide bond" evidence="2">
    <location>
        <begin position="54"/>
        <end position="59"/>
    </location>
</feature>
<comment type="function">
    <text evidence="1">Basic protein that binds to cell membrane and depolarizes cardiomyocytes. This cytotoxin also possesses lytic activity on many other cells, including red blood cells. Interaction with sulfatides in the cell membrane induces pore formation and cell internalization and is responsible for cytotoxicity in cardiomyocytes. It targets the mitochondrial membrane and induces mitochondrial swelling and fragmentation. Inhibits protein kinases C. It binds to the integrin alpha-V/beta-3 with a moderate affinity.</text>
</comment>
<comment type="subunit">
    <text evidence="3">Monomer in solution; Homodimer and oligomer in the presence of negatively charged lipids forming a pore with a size ranging between 20 and 30 angstroms.</text>
</comment>
<comment type="subcellular location">
    <subcellularLocation>
        <location evidence="4">Secreted</location>
    </subcellularLocation>
    <subcellularLocation>
        <location evidence="3">Target cell membrane</location>
    </subcellularLocation>
</comment>
<comment type="tissue specificity">
    <text evidence="7">Expressed by the venom gland.</text>
</comment>
<comment type="miscellaneous">
    <text evidence="2">Positive charges of Lys residues are necessary for cytolytic activity of this toxin, but not for its binding ability.</text>
</comment>
<comment type="miscellaneous">
    <text evidence="6">Is classified as a P-type cytotoxin, since a proline residue stands at position 30 (Pro-31 in standard classification).</text>
</comment>
<comment type="similarity">
    <text evidence="6">Belongs to the three-finger toxin family. Short-chain subfamily. Type IA cytotoxin sub-subfamily.</text>
</comment>
<organism>
    <name type="scientific">Naja nigricollis</name>
    <name type="common">Black-necked spitting cobra</name>
    <dbReference type="NCBI Taxonomy" id="8654"/>
    <lineage>
        <taxon>Eukaryota</taxon>
        <taxon>Metazoa</taxon>
        <taxon>Chordata</taxon>
        <taxon>Craniata</taxon>
        <taxon>Vertebrata</taxon>
        <taxon>Euteleostomi</taxon>
        <taxon>Lepidosauria</taxon>
        <taxon>Squamata</taxon>
        <taxon>Bifurcata</taxon>
        <taxon>Unidentata</taxon>
        <taxon>Episquamata</taxon>
        <taxon>Toxicofera</taxon>
        <taxon>Serpentes</taxon>
        <taxon>Colubroidea</taxon>
        <taxon>Elapidae</taxon>
        <taxon>Elapinae</taxon>
        <taxon>Naja</taxon>
    </lineage>
</organism>
<dbReference type="SMR" id="P0DSN1"/>
<dbReference type="GO" id="GO:0005576">
    <property type="term" value="C:extracellular region"/>
    <property type="evidence" value="ECO:0007669"/>
    <property type="project" value="UniProtKB-SubCell"/>
</dbReference>
<dbReference type="GO" id="GO:0016020">
    <property type="term" value="C:membrane"/>
    <property type="evidence" value="ECO:0007669"/>
    <property type="project" value="UniProtKB-KW"/>
</dbReference>
<dbReference type="GO" id="GO:0044218">
    <property type="term" value="C:other organism cell membrane"/>
    <property type="evidence" value="ECO:0007669"/>
    <property type="project" value="UniProtKB-KW"/>
</dbReference>
<dbReference type="GO" id="GO:0090729">
    <property type="term" value="F:toxin activity"/>
    <property type="evidence" value="ECO:0007669"/>
    <property type="project" value="UniProtKB-KW"/>
</dbReference>
<dbReference type="GO" id="GO:0031640">
    <property type="term" value="P:killing of cells of another organism"/>
    <property type="evidence" value="ECO:0007669"/>
    <property type="project" value="UniProtKB-KW"/>
</dbReference>
<dbReference type="CDD" id="cd00206">
    <property type="entry name" value="TFP_snake_toxin"/>
    <property type="match status" value="1"/>
</dbReference>
<dbReference type="FunFam" id="2.10.60.10:FF:000024">
    <property type="entry name" value="Cytotoxin 1"/>
    <property type="match status" value="1"/>
</dbReference>
<dbReference type="Gene3D" id="2.10.60.10">
    <property type="entry name" value="CD59"/>
    <property type="match status" value="1"/>
</dbReference>
<dbReference type="InterPro" id="IPR003572">
    <property type="entry name" value="Cytotoxin_Cobra"/>
</dbReference>
<dbReference type="InterPro" id="IPR003571">
    <property type="entry name" value="Snake_3FTx"/>
</dbReference>
<dbReference type="InterPro" id="IPR045860">
    <property type="entry name" value="Snake_toxin-like_sf"/>
</dbReference>
<dbReference type="InterPro" id="IPR018354">
    <property type="entry name" value="Snake_toxin_con_site"/>
</dbReference>
<dbReference type="InterPro" id="IPR054131">
    <property type="entry name" value="Toxin_cobra-type"/>
</dbReference>
<dbReference type="Pfam" id="PF21947">
    <property type="entry name" value="Toxin_cobra-type"/>
    <property type="match status" value="1"/>
</dbReference>
<dbReference type="PRINTS" id="PR00282">
    <property type="entry name" value="CYTOTOXIN"/>
</dbReference>
<dbReference type="SUPFAM" id="SSF57302">
    <property type="entry name" value="Snake toxin-like"/>
    <property type="match status" value="1"/>
</dbReference>
<dbReference type="PROSITE" id="PS00272">
    <property type="entry name" value="SNAKE_TOXIN"/>
    <property type="match status" value="1"/>
</dbReference>
<keyword id="KW-0123">Cardiotoxin</keyword>
<keyword id="KW-0204">Cytolysis</keyword>
<keyword id="KW-0903">Direct protein sequencing</keyword>
<keyword id="KW-1015">Disulfide bond</keyword>
<keyword id="KW-0354">Hemolysis</keyword>
<keyword id="KW-0472">Membrane</keyword>
<keyword id="KW-0964">Secreted</keyword>
<keyword id="KW-1052">Target cell membrane</keyword>
<keyword id="KW-1053">Target membrane</keyword>
<keyword id="KW-0800">Toxin</keyword>
<name>3SAN_NAJNG</name>
<accession>P0DSN1</accession>